<accession>Q9R006</accession>
<organism>
    <name type="scientific">Rattus norvegicus</name>
    <name type="common">Rat</name>
    <dbReference type="NCBI Taxonomy" id="10116"/>
    <lineage>
        <taxon>Eukaryota</taxon>
        <taxon>Metazoa</taxon>
        <taxon>Chordata</taxon>
        <taxon>Craniata</taxon>
        <taxon>Vertebrata</taxon>
        <taxon>Euteleostomi</taxon>
        <taxon>Mammalia</taxon>
        <taxon>Eutheria</taxon>
        <taxon>Euarchontoglires</taxon>
        <taxon>Glires</taxon>
        <taxon>Rodentia</taxon>
        <taxon>Myomorpha</taxon>
        <taxon>Muroidea</taxon>
        <taxon>Muridae</taxon>
        <taxon>Murinae</taxon>
        <taxon>Rattus</taxon>
    </lineage>
</organism>
<protein>
    <recommendedName>
        <fullName>Prolactin-7A2</fullName>
    </recommendedName>
    <alternativeName>
        <fullName>Placental prolactin-like protein F</fullName>
        <shortName>PLP-F</shortName>
        <shortName>PRL-like protein F</shortName>
    </alternativeName>
</protein>
<evidence type="ECO:0000250" key="1"/>
<evidence type="ECO:0000255" key="2"/>
<evidence type="ECO:0000305" key="3"/>
<dbReference type="EMBL" id="AF139808">
    <property type="protein sequence ID" value="AAD52848.1"/>
    <property type="molecule type" value="mRNA"/>
</dbReference>
<dbReference type="RefSeq" id="NP_071975.1">
    <property type="nucleotide sequence ID" value="NM_022530.1"/>
</dbReference>
<dbReference type="SMR" id="Q9R006"/>
<dbReference type="FunCoup" id="Q9R006">
    <property type="interactions" value="3"/>
</dbReference>
<dbReference type="STRING" id="10116.ENSRNOP00000022381"/>
<dbReference type="GlyCosmos" id="Q9R006">
    <property type="glycosylation" value="4 sites, No reported glycans"/>
</dbReference>
<dbReference type="GlyGen" id="Q9R006">
    <property type="glycosylation" value="4 sites"/>
</dbReference>
<dbReference type="PaxDb" id="10116-ENSRNOP00000022381"/>
<dbReference type="GeneID" id="64361"/>
<dbReference type="KEGG" id="rno:64361"/>
<dbReference type="UCSC" id="RGD:620035">
    <property type="organism name" value="rat"/>
</dbReference>
<dbReference type="AGR" id="RGD:620035"/>
<dbReference type="CTD" id="64361"/>
<dbReference type="RGD" id="620035">
    <property type="gene designation" value="Prl7a3"/>
</dbReference>
<dbReference type="InParanoid" id="Q9R006"/>
<dbReference type="PhylomeDB" id="Q9R006"/>
<dbReference type="PRO" id="PR:Q9R006"/>
<dbReference type="Proteomes" id="UP000002494">
    <property type="component" value="Unplaced"/>
</dbReference>
<dbReference type="GO" id="GO:0005615">
    <property type="term" value="C:extracellular space"/>
    <property type="evidence" value="ECO:0000318"/>
    <property type="project" value="GO_Central"/>
</dbReference>
<dbReference type="GO" id="GO:0005179">
    <property type="term" value="F:hormone activity"/>
    <property type="evidence" value="ECO:0000318"/>
    <property type="project" value="GO_Central"/>
</dbReference>
<dbReference type="GO" id="GO:0005148">
    <property type="term" value="F:prolactin receptor binding"/>
    <property type="evidence" value="ECO:0000318"/>
    <property type="project" value="GO_Central"/>
</dbReference>
<dbReference type="GO" id="GO:0007166">
    <property type="term" value="P:cell surface receptor signaling pathway"/>
    <property type="evidence" value="ECO:0000318"/>
    <property type="project" value="GO_Central"/>
</dbReference>
<dbReference type="GO" id="GO:0007565">
    <property type="term" value="P:female pregnancy"/>
    <property type="evidence" value="ECO:0000318"/>
    <property type="project" value="GO_Central"/>
</dbReference>
<dbReference type="GO" id="GO:0030879">
    <property type="term" value="P:mammary gland development"/>
    <property type="evidence" value="ECO:0000318"/>
    <property type="project" value="GO_Central"/>
</dbReference>
<dbReference type="GO" id="GO:1903489">
    <property type="term" value="P:positive regulation of lactation"/>
    <property type="evidence" value="ECO:0000318"/>
    <property type="project" value="GO_Central"/>
</dbReference>
<dbReference type="GO" id="GO:0046427">
    <property type="term" value="P:positive regulation of receptor signaling pathway via JAK-STAT"/>
    <property type="evidence" value="ECO:0000318"/>
    <property type="project" value="GO_Central"/>
</dbReference>
<dbReference type="GO" id="GO:0031667">
    <property type="term" value="P:response to nutrient levels"/>
    <property type="evidence" value="ECO:0000318"/>
    <property type="project" value="GO_Central"/>
</dbReference>
<dbReference type="FunFam" id="1.20.1250.10:FF:000041">
    <property type="entry name" value="Growth hormone d20"/>
    <property type="match status" value="1"/>
</dbReference>
<dbReference type="Gene3D" id="1.20.1250.10">
    <property type="match status" value="1"/>
</dbReference>
<dbReference type="InterPro" id="IPR009079">
    <property type="entry name" value="4_helix_cytokine-like_core"/>
</dbReference>
<dbReference type="InterPro" id="IPR001400">
    <property type="entry name" value="Somatotropin/Prolactin"/>
</dbReference>
<dbReference type="InterPro" id="IPR018116">
    <property type="entry name" value="Somatotropin_CS"/>
</dbReference>
<dbReference type="PANTHER" id="PTHR11417:SF9">
    <property type="entry name" value="PROLACTIN-7A2"/>
    <property type="match status" value="1"/>
</dbReference>
<dbReference type="PANTHER" id="PTHR11417">
    <property type="entry name" value="SOMATOTROPIN,PROLACTIN"/>
    <property type="match status" value="1"/>
</dbReference>
<dbReference type="Pfam" id="PF00103">
    <property type="entry name" value="Hormone_1"/>
    <property type="match status" value="1"/>
</dbReference>
<dbReference type="SUPFAM" id="SSF47266">
    <property type="entry name" value="4-helical cytokines"/>
    <property type="match status" value="1"/>
</dbReference>
<dbReference type="PROSITE" id="PS00338">
    <property type="entry name" value="SOMATOTROPIN_2"/>
    <property type="match status" value="1"/>
</dbReference>
<reference key="1">
    <citation type="journal article" date="2000" name="J. Mol. Endocrinol.">
        <title>Identification of two new nonclassical members of the rat prolactin family.</title>
        <authorList>
            <person name="Sahgal N."/>
            <person name="Knipp G.T."/>
            <person name="Liu B."/>
            <person name="Chapman B.M."/>
            <person name="Dai G."/>
            <person name="Soares M.J."/>
        </authorList>
    </citation>
    <scope>NUCLEOTIDE SEQUENCE [MRNA]</scope>
    <source>
        <strain>Sprague-Dawley</strain>
        <tissue>Placenta</tissue>
    </source>
</reference>
<comment type="subcellular location">
    <subcellularLocation>
        <location evidence="1">Secreted</location>
    </subcellularLocation>
</comment>
<comment type="tissue specificity">
    <text>Expression restricted to placental tissues. Trophoblast giant cells are found to be the major source.</text>
</comment>
<comment type="similarity">
    <text evidence="3">Belongs to the somatotropin/prolactin family.</text>
</comment>
<sequence length="250" mass="28882">MQLSFSRPRPWTLLLMVVSNLLLWENVSSGNLNSNETDGDLLLHRGLFDTATRLSQDIRDLDIEFLRMYAVNEVSEKLYNKHMLEFIEDMDFVVKALTCCHNYSIKTPENLDEAQQIPFNDFPWLILSRMWGWNETSKNLLTILRSIPGMHDDVISLAQAIERKLAELFEYTQSILTLIFGPTENVDRSIFSGLEDLKASDEELRFFALCKFSYCLRVDLQTIELYFKLLQCAVNVNSNVCLSINSEDSS</sequence>
<feature type="signal peptide" evidence="2">
    <location>
        <begin position="1"/>
        <end position="29"/>
    </location>
</feature>
<feature type="chain" id="PRO_0000045131" description="Prolactin-7A2">
    <location>
        <begin position="30"/>
        <end position="250"/>
    </location>
</feature>
<feature type="glycosylation site" description="N-linked (GlcNAc...) asparagine" evidence="2">
    <location>
        <position position="26"/>
    </location>
</feature>
<feature type="glycosylation site" description="N-linked (GlcNAc...) asparagine" evidence="2">
    <location>
        <position position="35"/>
    </location>
</feature>
<feature type="glycosylation site" description="N-linked (GlcNAc...) asparagine" evidence="2">
    <location>
        <position position="102"/>
    </location>
</feature>
<feature type="glycosylation site" description="N-linked (GlcNAc...) asparagine" evidence="2">
    <location>
        <position position="134"/>
    </location>
</feature>
<feature type="disulfide bond" evidence="1">
    <location>
        <begin position="100"/>
        <end position="215"/>
    </location>
</feature>
<feature type="disulfide bond" evidence="1">
    <location>
        <begin position="232"/>
        <end position="241"/>
    </location>
</feature>
<proteinExistence type="evidence at transcript level"/>
<name>PR7A2_RAT</name>
<gene>
    <name type="primary">Prl7a2</name>
    <name type="synonym">Prl7a3</name>
    <name type="synonym">Prlpf</name>
</gene>
<keyword id="KW-1015">Disulfide bond</keyword>
<keyword id="KW-0325">Glycoprotein</keyword>
<keyword id="KW-0372">Hormone</keyword>
<keyword id="KW-1185">Reference proteome</keyword>
<keyword id="KW-0964">Secreted</keyword>
<keyword id="KW-0732">Signal</keyword>